<organism>
    <name type="scientific">Schizosaccharomyces pombe (strain 972 / ATCC 24843)</name>
    <name type="common">Fission yeast</name>
    <dbReference type="NCBI Taxonomy" id="284812"/>
    <lineage>
        <taxon>Eukaryota</taxon>
        <taxon>Fungi</taxon>
        <taxon>Dikarya</taxon>
        <taxon>Ascomycota</taxon>
        <taxon>Taphrinomycotina</taxon>
        <taxon>Schizosaccharomycetes</taxon>
        <taxon>Schizosaccharomycetales</taxon>
        <taxon>Schizosaccharomycetaceae</taxon>
        <taxon>Schizosaccharomyces</taxon>
    </lineage>
</organism>
<dbReference type="EMBL" id="CU329670">
    <property type="protein sequence ID" value="CAB60232.1"/>
    <property type="molecule type" value="Genomic_DNA"/>
</dbReference>
<dbReference type="RefSeq" id="NP_594849.1">
    <property type="nucleotide sequence ID" value="NM_001020278.2"/>
</dbReference>
<dbReference type="SMR" id="Q9UTR9"/>
<dbReference type="BioGRID" id="279683">
    <property type="interactions" value="4"/>
</dbReference>
<dbReference type="FunCoup" id="Q9UTR9">
    <property type="interactions" value="196"/>
</dbReference>
<dbReference type="IntAct" id="Q9UTR9">
    <property type="interactions" value="1"/>
</dbReference>
<dbReference type="MINT" id="Q9UTR9"/>
<dbReference type="STRING" id="284812.Q9UTR9"/>
<dbReference type="SwissPalm" id="Q9UTR9"/>
<dbReference type="PaxDb" id="4896-SPAC1006.02.1"/>
<dbReference type="EnsemblFungi" id="SPAC1006.02.1">
    <property type="protein sequence ID" value="SPAC1006.02.1:pep"/>
    <property type="gene ID" value="SPAC1006.02"/>
</dbReference>
<dbReference type="GeneID" id="2543255"/>
<dbReference type="KEGG" id="spo:2543255"/>
<dbReference type="PomBase" id="SPAC1006.02">
    <property type="gene designation" value="asa1"/>
</dbReference>
<dbReference type="VEuPathDB" id="FungiDB:SPAC1006.02"/>
<dbReference type="eggNOG" id="KOG0322">
    <property type="taxonomic scope" value="Eukaryota"/>
</dbReference>
<dbReference type="HOGENOM" id="CLU_041940_0_1_1"/>
<dbReference type="InParanoid" id="Q9UTR9"/>
<dbReference type="OMA" id="YQRQSMQ"/>
<dbReference type="PhylomeDB" id="Q9UTR9"/>
<dbReference type="PRO" id="PR:Q9UTR9"/>
<dbReference type="Proteomes" id="UP000002485">
    <property type="component" value="Chromosome I"/>
</dbReference>
<dbReference type="GO" id="GO:0005829">
    <property type="term" value="C:cytosol"/>
    <property type="evidence" value="ECO:0007005"/>
    <property type="project" value="PomBase"/>
</dbReference>
<dbReference type="GO" id="GO:0005634">
    <property type="term" value="C:nucleus"/>
    <property type="evidence" value="ECO:0007005"/>
    <property type="project" value="PomBase"/>
</dbReference>
<dbReference type="GO" id="GO:0110078">
    <property type="term" value="C:TTT Hsp90 cochaperone complex"/>
    <property type="evidence" value="ECO:0000314"/>
    <property type="project" value="PomBase"/>
</dbReference>
<dbReference type="GO" id="GO:0051083">
    <property type="term" value="P:'de novo' cotranslational protein folding"/>
    <property type="evidence" value="ECO:0000305"/>
    <property type="project" value="PomBase"/>
</dbReference>
<dbReference type="GO" id="GO:0006325">
    <property type="term" value="P:chromatin organization"/>
    <property type="evidence" value="ECO:0007669"/>
    <property type="project" value="UniProtKB-KW"/>
</dbReference>
<dbReference type="FunFam" id="2.130.10.10:FF:002922">
    <property type="entry name" value="Protein DECREASED SIZE EXCLUSION LIMIT 1"/>
    <property type="match status" value="1"/>
</dbReference>
<dbReference type="Gene3D" id="2.130.10.10">
    <property type="entry name" value="YVTN repeat-like/Quinoprotein amine dehydrogenase"/>
    <property type="match status" value="2"/>
</dbReference>
<dbReference type="InterPro" id="IPR015943">
    <property type="entry name" value="WD40/YVTN_repeat-like_dom_sf"/>
</dbReference>
<dbReference type="InterPro" id="IPR036322">
    <property type="entry name" value="WD40_repeat_dom_sf"/>
</dbReference>
<dbReference type="InterPro" id="IPR001680">
    <property type="entry name" value="WD40_rpt"/>
</dbReference>
<dbReference type="PANTHER" id="PTHR19854:SF1">
    <property type="entry name" value="GUANINE NUCLEOTIDE-BINDING PROTEIN SUBUNIT BETA-LIKE PROTEIN 1"/>
    <property type="match status" value="1"/>
</dbReference>
<dbReference type="PANTHER" id="PTHR19854">
    <property type="entry name" value="TRANSDUCIN BETA-LIKE 3"/>
    <property type="match status" value="1"/>
</dbReference>
<dbReference type="Pfam" id="PF00400">
    <property type="entry name" value="WD40"/>
    <property type="match status" value="2"/>
</dbReference>
<dbReference type="SMART" id="SM00320">
    <property type="entry name" value="WD40"/>
    <property type="match status" value="5"/>
</dbReference>
<dbReference type="SUPFAM" id="SSF50978">
    <property type="entry name" value="WD40 repeat-like"/>
    <property type="match status" value="1"/>
</dbReference>
<dbReference type="PROSITE" id="PS50082">
    <property type="entry name" value="WD_REPEATS_2"/>
    <property type="match status" value="1"/>
</dbReference>
<dbReference type="PROSITE" id="PS50294">
    <property type="entry name" value="WD_REPEATS_REGION"/>
    <property type="match status" value="2"/>
</dbReference>
<gene>
    <name type="primary">asa1</name>
    <name type="ORF">SPAC1006.02</name>
</gene>
<comment type="function">
    <text>Component of the ASTRA complex probably involved in chromatin remodeling.</text>
</comment>
<comment type="subunit">
    <text evidence="2">Component of the ASTRA chromatin-remodeling machinery complex.</text>
</comment>
<comment type="subcellular location">
    <subcellularLocation>
        <location evidence="1">Cytoplasm</location>
    </subcellularLocation>
    <subcellularLocation>
        <location evidence="1">Nucleus</location>
    </subcellularLocation>
</comment>
<comment type="similarity">
    <text evidence="3">Belongs to the WD repeat ASA1 family.</text>
</comment>
<name>ASA1_SCHPO</name>
<feature type="chain" id="PRO_0000316564" description="ASTRA-associated protein 1">
    <location>
        <begin position="1"/>
        <end position="368"/>
    </location>
</feature>
<feature type="repeat" description="WD 1">
    <location>
        <begin position="12"/>
        <end position="50"/>
    </location>
</feature>
<feature type="repeat" description="WD 2">
    <location>
        <begin position="53"/>
        <end position="91"/>
    </location>
</feature>
<feature type="repeat" description="WD 3">
    <location>
        <begin position="246"/>
        <end position="283"/>
    </location>
</feature>
<feature type="repeat" description="WD 4">
    <location>
        <begin position="294"/>
        <end position="333"/>
    </location>
</feature>
<feature type="repeat" description="WD 5">
    <location>
        <begin position="336"/>
        <end position="368"/>
    </location>
</feature>
<protein>
    <recommendedName>
        <fullName>ASTRA-associated protein 1</fullName>
    </recommendedName>
</protein>
<evidence type="ECO:0000269" key="1">
    <source>
    </source>
</evidence>
<evidence type="ECO:0000269" key="2">
    <source>
    </source>
</evidence>
<evidence type="ECO:0000305" key="3"/>
<proteinExistence type="evidence at protein level"/>
<reference key="1">
    <citation type="journal article" date="2002" name="Nature">
        <title>The genome sequence of Schizosaccharomyces pombe.</title>
        <authorList>
            <person name="Wood V."/>
            <person name="Gwilliam R."/>
            <person name="Rajandream M.A."/>
            <person name="Lyne M.H."/>
            <person name="Lyne R."/>
            <person name="Stewart A."/>
            <person name="Sgouros J.G."/>
            <person name="Peat N."/>
            <person name="Hayles J."/>
            <person name="Baker S.G."/>
            <person name="Basham D."/>
            <person name="Bowman S."/>
            <person name="Brooks K."/>
            <person name="Brown D."/>
            <person name="Brown S."/>
            <person name="Chillingworth T."/>
            <person name="Churcher C.M."/>
            <person name="Collins M."/>
            <person name="Connor R."/>
            <person name="Cronin A."/>
            <person name="Davis P."/>
            <person name="Feltwell T."/>
            <person name="Fraser A."/>
            <person name="Gentles S."/>
            <person name="Goble A."/>
            <person name="Hamlin N."/>
            <person name="Harris D.E."/>
            <person name="Hidalgo J."/>
            <person name="Hodgson G."/>
            <person name="Holroyd S."/>
            <person name="Hornsby T."/>
            <person name="Howarth S."/>
            <person name="Huckle E.J."/>
            <person name="Hunt S."/>
            <person name="Jagels K."/>
            <person name="James K.D."/>
            <person name="Jones L."/>
            <person name="Jones M."/>
            <person name="Leather S."/>
            <person name="McDonald S."/>
            <person name="McLean J."/>
            <person name="Mooney P."/>
            <person name="Moule S."/>
            <person name="Mungall K.L."/>
            <person name="Murphy L.D."/>
            <person name="Niblett D."/>
            <person name="Odell C."/>
            <person name="Oliver K."/>
            <person name="O'Neil S."/>
            <person name="Pearson D."/>
            <person name="Quail M.A."/>
            <person name="Rabbinowitsch E."/>
            <person name="Rutherford K.M."/>
            <person name="Rutter S."/>
            <person name="Saunders D."/>
            <person name="Seeger K."/>
            <person name="Sharp S."/>
            <person name="Skelton J."/>
            <person name="Simmonds M.N."/>
            <person name="Squares R."/>
            <person name="Squares S."/>
            <person name="Stevens K."/>
            <person name="Taylor K."/>
            <person name="Taylor R.G."/>
            <person name="Tivey A."/>
            <person name="Walsh S.V."/>
            <person name="Warren T."/>
            <person name="Whitehead S."/>
            <person name="Woodward J.R."/>
            <person name="Volckaert G."/>
            <person name="Aert R."/>
            <person name="Robben J."/>
            <person name="Grymonprez B."/>
            <person name="Weltjens I."/>
            <person name="Vanstreels E."/>
            <person name="Rieger M."/>
            <person name="Schaefer M."/>
            <person name="Mueller-Auer S."/>
            <person name="Gabel C."/>
            <person name="Fuchs M."/>
            <person name="Duesterhoeft A."/>
            <person name="Fritzc C."/>
            <person name="Holzer E."/>
            <person name="Moestl D."/>
            <person name="Hilbert H."/>
            <person name="Borzym K."/>
            <person name="Langer I."/>
            <person name="Beck A."/>
            <person name="Lehrach H."/>
            <person name="Reinhardt R."/>
            <person name="Pohl T.M."/>
            <person name="Eger P."/>
            <person name="Zimmermann W."/>
            <person name="Wedler H."/>
            <person name="Wambutt R."/>
            <person name="Purnelle B."/>
            <person name="Goffeau A."/>
            <person name="Cadieu E."/>
            <person name="Dreano S."/>
            <person name="Gloux S."/>
            <person name="Lelaure V."/>
            <person name="Mottier S."/>
            <person name="Galibert F."/>
            <person name="Aves S.J."/>
            <person name="Xiang Z."/>
            <person name="Hunt C."/>
            <person name="Moore K."/>
            <person name="Hurst S.M."/>
            <person name="Lucas M."/>
            <person name="Rochet M."/>
            <person name="Gaillardin C."/>
            <person name="Tallada V.A."/>
            <person name="Garzon A."/>
            <person name="Thode G."/>
            <person name="Daga R.R."/>
            <person name="Cruzado L."/>
            <person name="Jimenez J."/>
            <person name="Sanchez M."/>
            <person name="del Rey F."/>
            <person name="Benito J."/>
            <person name="Dominguez A."/>
            <person name="Revuelta J.L."/>
            <person name="Moreno S."/>
            <person name="Armstrong J."/>
            <person name="Forsburg S.L."/>
            <person name="Cerutti L."/>
            <person name="Lowe T."/>
            <person name="McCombie W.R."/>
            <person name="Paulsen I."/>
            <person name="Potashkin J."/>
            <person name="Shpakovski G.V."/>
            <person name="Ussery D."/>
            <person name="Barrell B.G."/>
            <person name="Nurse P."/>
        </authorList>
    </citation>
    <scope>NUCLEOTIDE SEQUENCE [LARGE SCALE GENOMIC DNA]</scope>
    <source>
        <strain>972 / ATCC 24843</strain>
    </source>
</reference>
<reference key="2">
    <citation type="journal article" date="2006" name="Nat. Biotechnol.">
        <title>ORFeome cloning and global analysis of protein localization in the fission yeast Schizosaccharomyces pombe.</title>
        <authorList>
            <person name="Matsuyama A."/>
            <person name="Arai R."/>
            <person name="Yashiroda Y."/>
            <person name="Shirai A."/>
            <person name="Kamata A."/>
            <person name="Sekido S."/>
            <person name="Kobayashi Y."/>
            <person name="Hashimoto A."/>
            <person name="Hamamoto M."/>
            <person name="Hiraoka Y."/>
            <person name="Horinouchi S."/>
            <person name="Yoshida M."/>
        </authorList>
    </citation>
    <scope>SUBCELLULAR LOCATION [LARGE SCALE ANALYSIS]</scope>
</reference>
<reference key="3">
    <citation type="journal article" date="2008" name="Genome Biol.">
        <title>Chromatin Central: towards the comparative proteome by accurate mapping of the yeast proteomic environment.</title>
        <authorList>
            <person name="Shevchenko A."/>
            <person name="Roguev A."/>
            <person name="Schaft D."/>
            <person name="Buchanan L."/>
            <person name="Habermann B."/>
            <person name="Sakalar C."/>
            <person name="Thomas H."/>
            <person name="Krogan N.J."/>
            <person name="Shevchenko A."/>
            <person name="Stewart A.F."/>
        </authorList>
    </citation>
    <scope>IDENTIFICATION IN THE ASTRA COMPLEX</scope>
    <scope>IDENTIFICATION BY MASS SPECTROMETRY</scope>
</reference>
<sequence length="368" mass="40846">MVVPTPFYVLRGHSSSVTSVLFDANEYLYSGDEAGFVICWCLTSMRPKCAWRAHTKTILGMQIVKGGALCTHGRDCRLVTWKIDFNCMTDNFMSLSKLAELQNYGPEASSETEKSSAFISIHSNIVVNSLTFCPFSYSPQSKIVVLCNTLNFEELDVYDDESLYHPQTHKEDCGKRLQTRIQPEESVGKTGSVMSTSVTVTDEKYVLLAAGYESGHVVQYICSLENVKTVTLDFKAVWKMVYAYKSHSQPVLSVEYAGSKLFSTGADDCICLHPTPSSIADDLGSLPHPIFRKTKHCGQQNIRIRSDNKILATAGWDGRGRVYSCQTLAPLAVLKYHSDGINSLAFHPGSNVIALASKDTRISLWKLY</sequence>
<keyword id="KW-0156">Chromatin regulator</keyword>
<keyword id="KW-0963">Cytoplasm</keyword>
<keyword id="KW-0539">Nucleus</keyword>
<keyword id="KW-1185">Reference proteome</keyword>
<keyword id="KW-0677">Repeat</keyword>
<keyword id="KW-0853">WD repeat</keyword>
<accession>Q9UTR9</accession>